<evidence type="ECO:0000255" key="1">
    <source>
        <dbReference type="HAMAP-Rule" id="MF_00251"/>
    </source>
</evidence>
<evidence type="ECO:0000305" key="2"/>
<reference key="1">
    <citation type="submission" date="2006-09" db="EMBL/GenBank/DDBJ databases">
        <title>Complete sequence of Rhodopseudomonas palustris BisA53.</title>
        <authorList>
            <consortium name="US DOE Joint Genome Institute"/>
            <person name="Copeland A."/>
            <person name="Lucas S."/>
            <person name="Lapidus A."/>
            <person name="Barry K."/>
            <person name="Detter J.C."/>
            <person name="Glavina del Rio T."/>
            <person name="Hammon N."/>
            <person name="Israni S."/>
            <person name="Dalin E."/>
            <person name="Tice H."/>
            <person name="Pitluck S."/>
            <person name="Chain P."/>
            <person name="Malfatti S."/>
            <person name="Shin M."/>
            <person name="Vergez L."/>
            <person name="Schmutz J."/>
            <person name="Larimer F."/>
            <person name="Land M."/>
            <person name="Hauser L."/>
            <person name="Pelletier D.A."/>
            <person name="Kyrpides N."/>
            <person name="Kim E."/>
            <person name="Harwood C.S."/>
            <person name="Oda Y."/>
            <person name="Richardson P."/>
        </authorList>
    </citation>
    <scope>NUCLEOTIDE SEQUENCE [LARGE SCALE GENOMIC DNA]</scope>
    <source>
        <strain>BisA53</strain>
    </source>
</reference>
<comment type="similarity">
    <text evidence="1">Belongs to the bacterial ribosomal protein bL36 family.</text>
</comment>
<accession>Q07J43</accession>
<protein>
    <recommendedName>
        <fullName evidence="1">Large ribosomal subunit protein bL36</fullName>
    </recommendedName>
    <alternativeName>
        <fullName evidence="2">50S ribosomal protein L36</fullName>
    </alternativeName>
</protein>
<organism>
    <name type="scientific">Rhodopseudomonas palustris (strain BisA53)</name>
    <dbReference type="NCBI Taxonomy" id="316055"/>
    <lineage>
        <taxon>Bacteria</taxon>
        <taxon>Pseudomonadati</taxon>
        <taxon>Pseudomonadota</taxon>
        <taxon>Alphaproteobacteria</taxon>
        <taxon>Hyphomicrobiales</taxon>
        <taxon>Nitrobacteraceae</taxon>
        <taxon>Rhodopseudomonas</taxon>
    </lineage>
</organism>
<sequence>MKVRNSLKSLRSRHRNNRLVRRKGRVYVINKVQRRFKARQG</sequence>
<gene>
    <name evidence="1" type="primary">rpmJ</name>
    <name type="ordered locus">RPE_4115</name>
</gene>
<feature type="chain" id="PRO_0000302283" description="Large ribosomal subunit protein bL36">
    <location>
        <begin position="1"/>
        <end position="41"/>
    </location>
</feature>
<dbReference type="EMBL" id="CP000463">
    <property type="protein sequence ID" value="ABJ08041.1"/>
    <property type="molecule type" value="Genomic_DNA"/>
</dbReference>
<dbReference type="SMR" id="Q07J43"/>
<dbReference type="STRING" id="316055.RPE_4115"/>
<dbReference type="KEGG" id="rpe:RPE_4115"/>
<dbReference type="eggNOG" id="COG0257">
    <property type="taxonomic scope" value="Bacteria"/>
</dbReference>
<dbReference type="HOGENOM" id="CLU_135723_3_0_5"/>
<dbReference type="GO" id="GO:1990904">
    <property type="term" value="C:ribonucleoprotein complex"/>
    <property type="evidence" value="ECO:0007669"/>
    <property type="project" value="UniProtKB-KW"/>
</dbReference>
<dbReference type="GO" id="GO:0005840">
    <property type="term" value="C:ribosome"/>
    <property type="evidence" value="ECO:0007669"/>
    <property type="project" value="UniProtKB-KW"/>
</dbReference>
<dbReference type="GO" id="GO:0003735">
    <property type="term" value="F:structural constituent of ribosome"/>
    <property type="evidence" value="ECO:0007669"/>
    <property type="project" value="InterPro"/>
</dbReference>
<dbReference type="GO" id="GO:0006412">
    <property type="term" value="P:translation"/>
    <property type="evidence" value="ECO:0007669"/>
    <property type="project" value="UniProtKB-UniRule"/>
</dbReference>
<dbReference type="HAMAP" id="MF_00251">
    <property type="entry name" value="Ribosomal_bL36"/>
    <property type="match status" value="1"/>
</dbReference>
<dbReference type="InterPro" id="IPR000473">
    <property type="entry name" value="Ribosomal_bL36"/>
</dbReference>
<dbReference type="InterPro" id="IPR035977">
    <property type="entry name" value="Ribosomal_bL36_sp"/>
</dbReference>
<dbReference type="InterPro" id="IPR047621">
    <property type="entry name" value="Ribosomal_L36_bact"/>
</dbReference>
<dbReference type="NCBIfam" id="NF002021">
    <property type="entry name" value="PRK00831.1"/>
    <property type="match status" value="1"/>
</dbReference>
<dbReference type="NCBIfam" id="TIGR01022">
    <property type="entry name" value="rpmJ_bact"/>
    <property type="match status" value="1"/>
</dbReference>
<dbReference type="PANTHER" id="PTHR47781">
    <property type="entry name" value="50S RIBOSOMAL PROTEIN L36 2"/>
    <property type="match status" value="1"/>
</dbReference>
<dbReference type="PANTHER" id="PTHR47781:SF1">
    <property type="entry name" value="LARGE RIBOSOMAL SUBUNIT PROTEIN BL36B"/>
    <property type="match status" value="1"/>
</dbReference>
<dbReference type="Pfam" id="PF00444">
    <property type="entry name" value="Ribosomal_L36"/>
    <property type="match status" value="1"/>
</dbReference>
<dbReference type="SUPFAM" id="SSF57840">
    <property type="entry name" value="Ribosomal protein L36"/>
    <property type="match status" value="1"/>
</dbReference>
<dbReference type="PROSITE" id="PS00828">
    <property type="entry name" value="RIBOSOMAL_L36"/>
    <property type="match status" value="1"/>
</dbReference>
<proteinExistence type="inferred from homology"/>
<keyword id="KW-0687">Ribonucleoprotein</keyword>
<keyword id="KW-0689">Ribosomal protein</keyword>
<name>RL36_RHOP5</name>